<accession>Q4VZQ0</accession>
<accession>A5J1R8</accession>
<gene>
    <name evidence="1" type="primary">psbK</name>
    <name type="ordered locus">CsCp006</name>
</gene>
<name>PSBK_CUCSA</name>
<keyword id="KW-0150">Chloroplast</keyword>
<keyword id="KW-0472">Membrane</keyword>
<keyword id="KW-0602">Photosynthesis</keyword>
<keyword id="KW-0604">Photosystem II</keyword>
<keyword id="KW-0934">Plastid</keyword>
<keyword id="KW-0674">Reaction center</keyword>
<keyword id="KW-0793">Thylakoid</keyword>
<keyword id="KW-0812">Transmembrane</keyword>
<keyword id="KW-1133">Transmembrane helix</keyword>
<organism>
    <name type="scientific">Cucumis sativus</name>
    <name type="common">Cucumber</name>
    <dbReference type="NCBI Taxonomy" id="3659"/>
    <lineage>
        <taxon>Eukaryota</taxon>
        <taxon>Viridiplantae</taxon>
        <taxon>Streptophyta</taxon>
        <taxon>Embryophyta</taxon>
        <taxon>Tracheophyta</taxon>
        <taxon>Spermatophyta</taxon>
        <taxon>Magnoliopsida</taxon>
        <taxon>eudicotyledons</taxon>
        <taxon>Gunneridae</taxon>
        <taxon>Pentapetalae</taxon>
        <taxon>rosids</taxon>
        <taxon>fabids</taxon>
        <taxon>Cucurbitales</taxon>
        <taxon>Cucurbitaceae</taxon>
        <taxon>Benincaseae</taxon>
        <taxon>Cucumis</taxon>
    </lineage>
</organism>
<geneLocation type="chloroplast"/>
<comment type="function">
    <text evidence="1">One of the components of the core complex of photosystem II (PSII). PSII is a light-driven water:plastoquinone oxidoreductase that uses light energy to abstract electrons from H(2)O, generating O(2) and a proton gradient subsequently used for ATP formation. It consists of a core antenna complex that captures photons, and an electron transfer chain that converts photonic excitation into a charge separation.</text>
</comment>
<comment type="subunit">
    <text evidence="1">PSII is composed of 1 copy each of membrane proteins PsbA, PsbB, PsbC, PsbD, PsbE, PsbF, PsbH, PsbI, PsbJ, PsbK, PsbL, PsbM, PsbT, PsbX, PsbY, PsbZ, Psb30/Ycf12, at least 3 peripheral proteins of the oxygen-evolving complex and a large number of cofactors. It forms dimeric complexes.</text>
</comment>
<comment type="subcellular location">
    <subcellularLocation>
        <location evidence="1">Plastid</location>
        <location evidence="1">Chloroplast thylakoid membrane</location>
        <topology evidence="1">Single-pass membrane protein</topology>
    </subcellularLocation>
</comment>
<comment type="similarity">
    <text evidence="1">Belongs to the PsbK family.</text>
</comment>
<protein>
    <recommendedName>
        <fullName evidence="1">Photosystem II reaction center protein K</fullName>
        <shortName evidence="1">PSII-K</shortName>
    </recommendedName>
</protein>
<sequence length="61" mass="6940">MLNILSFIGICLNSFLYSSSFFVAKLPEAYAFLNPIVDVMPVIPLFFFLLAFVWQAAVSFR</sequence>
<reference key="1">
    <citation type="journal article" date="2006" name="Plant Cell Rep.">
        <title>Complete sequence and organization of the cucumber (Cucumis sativus L. cv. Baekmibaekdadagi) chloroplast genome.</title>
        <authorList>
            <person name="Kim J.-S."/>
            <person name="Jung J.D."/>
            <person name="Lee J.-A."/>
            <person name="Park H.-W."/>
            <person name="Oh K.-H."/>
            <person name="Jeong W.J."/>
            <person name="Choi D.-W."/>
            <person name="Liu J.R."/>
            <person name="Cho K.Y."/>
        </authorList>
    </citation>
    <scope>NUCLEOTIDE SEQUENCE [LARGE SCALE GENOMIC DNA]</scope>
    <source>
        <strain>cv. Baekmibaekdadagi</strain>
    </source>
</reference>
<reference key="2">
    <citation type="journal article" date="2007" name="Cell. Mol. Biol. Lett.">
        <title>The complete structure of the cucumber (Cucumis sativus L.) chloroplast genome: its composition and comparative analysis.</title>
        <authorList>
            <person name="Plader W.W."/>
            <person name="Yukawa Y."/>
            <person name="Sugiura M."/>
            <person name="Malepszy S."/>
        </authorList>
    </citation>
    <scope>NUCLEOTIDE SEQUENCE [LARGE SCALE GENOMIC DNA]</scope>
    <source>
        <strain>cv. Borszczagowski</strain>
    </source>
</reference>
<reference key="3">
    <citation type="journal article" date="2007" name="Genome">
        <title>Sequencing cucumber (Cucumis sativus L.) chloroplast genomes identifies differences between chilling-tolerant and -susceptible cucumber lines.</title>
        <authorList>
            <person name="Chung S.-M."/>
            <person name="Gordon V.S."/>
            <person name="Staub J.E."/>
        </authorList>
    </citation>
    <scope>NUCLEOTIDE SEQUENCE [LARGE SCALE GENOMIC DNA]</scope>
    <source>
        <strain>cv. Chipper</strain>
        <strain>cv. Gy14</strain>
    </source>
</reference>
<evidence type="ECO:0000255" key="1">
    <source>
        <dbReference type="HAMAP-Rule" id="MF_00441"/>
    </source>
</evidence>
<proteinExistence type="inferred from homology"/>
<feature type="propeptide" id="PRO_0000276134" evidence="1">
    <location>
        <begin position="1"/>
        <end position="24"/>
    </location>
</feature>
<feature type="chain" id="PRO_0000276135" description="Photosystem II reaction center protein K" evidence="1">
    <location>
        <begin position="25"/>
        <end position="61"/>
    </location>
</feature>
<feature type="transmembrane region" description="Helical" evidence="1">
    <location>
        <begin position="40"/>
        <end position="60"/>
    </location>
</feature>
<dbReference type="EMBL" id="DQ119058">
    <property type="protein sequence ID" value="AAZ94635.1"/>
    <property type="molecule type" value="Genomic_DNA"/>
</dbReference>
<dbReference type="EMBL" id="AJ970307">
    <property type="protein sequence ID" value="CAJ00741.1"/>
    <property type="molecule type" value="Genomic_DNA"/>
</dbReference>
<dbReference type="EMBL" id="DQ865975">
    <property type="protein sequence ID" value="ABI97401.1"/>
    <property type="molecule type" value="Genomic_DNA"/>
</dbReference>
<dbReference type="EMBL" id="DQ865976">
    <property type="protein sequence ID" value="ABI98728.1"/>
    <property type="molecule type" value="Genomic_DNA"/>
</dbReference>
<dbReference type="RefSeq" id="YP_247582.1">
    <property type="nucleotide sequence ID" value="NC_007144.1"/>
</dbReference>
<dbReference type="SMR" id="Q4VZQ0"/>
<dbReference type="GeneID" id="3429284"/>
<dbReference type="KEGG" id="csv:3429284"/>
<dbReference type="OrthoDB" id="1673137at2759"/>
<dbReference type="GO" id="GO:0009535">
    <property type="term" value="C:chloroplast thylakoid membrane"/>
    <property type="evidence" value="ECO:0007669"/>
    <property type="project" value="UniProtKB-SubCell"/>
</dbReference>
<dbReference type="GO" id="GO:0009539">
    <property type="term" value="C:photosystem II reaction center"/>
    <property type="evidence" value="ECO:0007669"/>
    <property type="project" value="InterPro"/>
</dbReference>
<dbReference type="GO" id="GO:0015979">
    <property type="term" value="P:photosynthesis"/>
    <property type="evidence" value="ECO:0007669"/>
    <property type="project" value="UniProtKB-UniRule"/>
</dbReference>
<dbReference type="HAMAP" id="MF_00441">
    <property type="entry name" value="PSII_PsbK"/>
    <property type="match status" value="1"/>
</dbReference>
<dbReference type="InterPro" id="IPR003687">
    <property type="entry name" value="PSII_PsbK"/>
</dbReference>
<dbReference type="InterPro" id="IPR037270">
    <property type="entry name" value="PSII_PsbK_sf"/>
</dbReference>
<dbReference type="NCBIfam" id="NF002715">
    <property type="entry name" value="PRK02553.1"/>
    <property type="match status" value="1"/>
</dbReference>
<dbReference type="PANTHER" id="PTHR35325">
    <property type="match status" value="1"/>
</dbReference>
<dbReference type="PANTHER" id="PTHR35325:SF1">
    <property type="entry name" value="PHOTOSYSTEM II REACTION CENTER PROTEIN K"/>
    <property type="match status" value="1"/>
</dbReference>
<dbReference type="Pfam" id="PF02533">
    <property type="entry name" value="PsbK"/>
    <property type="match status" value="1"/>
</dbReference>
<dbReference type="SUPFAM" id="SSF161037">
    <property type="entry name" value="Photosystem II reaction center protein K, PsbK"/>
    <property type="match status" value="1"/>
</dbReference>